<sequence>MPAEKTQNVQDVFLNYIRKNKAPVTIFLVNGVKLQGIVTWFDNFSLLLRRDGHTQLVYKHAISTIMPASPVQLFEPTKEEVEA</sequence>
<organism>
    <name type="scientific">Rhodospirillum rubrum (strain ATCC 11170 / ATH 1.1.1 / DSM 467 / LMG 4362 / NCIMB 8255 / S1)</name>
    <dbReference type="NCBI Taxonomy" id="269796"/>
    <lineage>
        <taxon>Bacteria</taxon>
        <taxon>Pseudomonadati</taxon>
        <taxon>Pseudomonadota</taxon>
        <taxon>Alphaproteobacteria</taxon>
        <taxon>Rhodospirillales</taxon>
        <taxon>Rhodospirillaceae</taxon>
        <taxon>Rhodospirillum</taxon>
    </lineage>
</organism>
<feature type="chain" id="PRO_0000265182" description="RNA-binding protein Hfq">
    <location>
        <begin position="1"/>
        <end position="83"/>
    </location>
</feature>
<feature type="domain" description="Sm" evidence="2">
    <location>
        <begin position="11"/>
        <end position="71"/>
    </location>
</feature>
<gene>
    <name evidence="1" type="primary">hfq</name>
    <name type="ordered locus">Rru_A1684</name>
</gene>
<protein>
    <recommendedName>
        <fullName evidence="1">RNA-binding protein Hfq</fullName>
    </recommendedName>
</protein>
<comment type="function">
    <text evidence="1">RNA chaperone that binds small regulatory RNA (sRNAs) and mRNAs to facilitate mRNA translational regulation in response to envelope stress, environmental stress and changes in metabolite concentrations. Also binds with high specificity to tRNAs.</text>
</comment>
<comment type="subunit">
    <text evidence="1">Homohexamer.</text>
</comment>
<comment type="similarity">
    <text evidence="1">Belongs to the Hfq family.</text>
</comment>
<evidence type="ECO:0000255" key="1">
    <source>
        <dbReference type="HAMAP-Rule" id="MF_00436"/>
    </source>
</evidence>
<evidence type="ECO:0000255" key="2">
    <source>
        <dbReference type="PROSITE-ProRule" id="PRU01346"/>
    </source>
</evidence>
<accession>Q2RTR1</accession>
<keyword id="KW-1185">Reference proteome</keyword>
<keyword id="KW-0694">RNA-binding</keyword>
<keyword id="KW-0346">Stress response</keyword>
<reference key="1">
    <citation type="journal article" date="2011" name="Stand. Genomic Sci.">
        <title>Complete genome sequence of Rhodospirillum rubrum type strain (S1).</title>
        <authorList>
            <person name="Munk A.C."/>
            <person name="Copeland A."/>
            <person name="Lucas S."/>
            <person name="Lapidus A."/>
            <person name="Del Rio T.G."/>
            <person name="Barry K."/>
            <person name="Detter J.C."/>
            <person name="Hammon N."/>
            <person name="Israni S."/>
            <person name="Pitluck S."/>
            <person name="Brettin T."/>
            <person name="Bruce D."/>
            <person name="Han C."/>
            <person name="Tapia R."/>
            <person name="Gilna P."/>
            <person name="Schmutz J."/>
            <person name="Larimer F."/>
            <person name="Land M."/>
            <person name="Kyrpides N.C."/>
            <person name="Mavromatis K."/>
            <person name="Richardson P."/>
            <person name="Rohde M."/>
            <person name="Goeker M."/>
            <person name="Klenk H.P."/>
            <person name="Zhang Y."/>
            <person name="Roberts G.P."/>
            <person name="Reslewic S."/>
            <person name="Schwartz D.C."/>
        </authorList>
    </citation>
    <scope>NUCLEOTIDE SEQUENCE [LARGE SCALE GENOMIC DNA]</scope>
    <source>
        <strain>ATCC 11170 / ATH 1.1.1 / DSM 467 / LMG 4362 / NCIMB 8255 / S1</strain>
    </source>
</reference>
<dbReference type="EMBL" id="CP000230">
    <property type="protein sequence ID" value="ABC22484.1"/>
    <property type="molecule type" value="Genomic_DNA"/>
</dbReference>
<dbReference type="RefSeq" id="WP_011389374.1">
    <property type="nucleotide sequence ID" value="NC_007643.1"/>
</dbReference>
<dbReference type="RefSeq" id="YP_426771.1">
    <property type="nucleotide sequence ID" value="NC_007643.1"/>
</dbReference>
<dbReference type="SMR" id="Q2RTR1"/>
<dbReference type="STRING" id="269796.Rru_A1684"/>
<dbReference type="EnsemblBacteria" id="ABC22484">
    <property type="protein sequence ID" value="ABC22484"/>
    <property type="gene ID" value="Rru_A1684"/>
</dbReference>
<dbReference type="KEGG" id="rru:Rru_A1684"/>
<dbReference type="PATRIC" id="fig|269796.9.peg.1762"/>
<dbReference type="eggNOG" id="COG1923">
    <property type="taxonomic scope" value="Bacteria"/>
</dbReference>
<dbReference type="HOGENOM" id="CLU_113688_0_0_5"/>
<dbReference type="PhylomeDB" id="Q2RTR1"/>
<dbReference type="Proteomes" id="UP000001929">
    <property type="component" value="Chromosome"/>
</dbReference>
<dbReference type="GO" id="GO:0005829">
    <property type="term" value="C:cytosol"/>
    <property type="evidence" value="ECO:0007669"/>
    <property type="project" value="TreeGrafter"/>
</dbReference>
<dbReference type="GO" id="GO:0003723">
    <property type="term" value="F:RNA binding"/>
    <property type="evidence" value="ECO:0007669"/>
    <property type="project" value="UniProtKB-UniRule"/>
</dbReference>
<dbReference type="GO" id="GO:0006355">
    <property type="term" value="P:regulation of DNA-templated transcription"/>
    <property type="evidence" value="ECO:0007669"/>
    <property type="project" value="InterPro"/>
</dbReference>
<dbReference type="GO" id="GO:0043487">
    <property type="term" value="P:regulation of RNA stability"/>
    <property type="evidence" value="ECO:0007669"/>
    <property type="project" value="TreeGrafter"/>
</dbReference>
<dbReference type="GO" id="GO:0045974">
    <property type="term" value="P:regulation of translation, ncRNA-mediated"/>
    <property type="evidence" value="ECO:0007669"/>
    <property type="project" value="TreeGrafter"/>
</dbReference>
<dbReference type="CDD" id="cd01716">
    <property type="entry name" value="Hfq"/>
    <property type="match status" value="1"/>
</dbReference>
<dbReference type="Gene3D" id="2.30.30.100">
    <property type="match status" value="1"/>
</dbReference>
<dbReference type="HAMAP" id="MF_00436">
    <property type="entry name" value="Hfq"/>
    <property type="match status" value="1"/>
</dbReference>
<dbReference type="InterPro" id="IPR005001">
    <property type="entry name" value="Hfq"/>
</dbReference>
<dbReference type="InterPro" id="IPR010920">
    <property type="entry name" value="LSM_dom_sf"/>
</dbReference>
<dbReference type="InterPro" id="IPR047575">
    <property type="entry name" value="Sm"/>
</dbReference>
<dbReference type="NCBIfam" id="TIGR02383">
    <property type="entry name" value="Hfq"/>
    <property type="match status" value="1"/>
</dbReference>
<dbReference type="NCBIfam" id="NF001602">
    <property type="entry name" value="PRK00395.1"/>
    <property type="match status" value="1"/>
</dbReference>
<dbReference type="PANTHER" id="PTHR34772">
    <property type="entry name" value="RNA-BINDING PROTEIN HFQ"/>
    <property type="match status" value="1"/>
</dbReference>
<dbReference type="PANTHER" id="PTHR34772:SF1">
    <property type="entry name" value="RNA-BINDING PROTEIN HFQ"/>
    <property type="match status" value="1"/>
</dbReference>
<dbReference type="Pfam" id="PF17209">
    <property type="entry name" value="Hfq"/>
    <property type="match status" value="1"/>
</dbReference>
<dbReference type="SUPFAM" id="SSF50182">
    <property type="entry name" value="Sm-like ribonucleoproteins"/>
    <property type="match status" value="1"/>
</dbReference>
<dbReference type="PROSITE" id="PS52002">
    <property type="entry name" value="SM"/>
    <property type="match status" value="1"/>
</dbReference>
<name>HFQ_RHORT</name>
<proteinExistence type="inferred from homology"/>